<evidence type="ECO:0000255" key="1">
    <source>
        <dbReference type="HAMAP-Rule" id="MF_00014"/>
    </source>
</evidence>
<proteinExistence type="inferred from homology"/>
<accession>A6TRS7</accession>
<name>RIMM_ALKMQ</name>
<comment type="function">
    <text evidence="1">An accessory protein needed during the final step in the assembly of 30S ribosomal subunit, possibly for assembly of the head region. Essential for efficient processing of 16S rRNA. May be needed both before and after RbfA during the maturation of 16S rRNA. It has affinity for free ribosomal 30S subunits but not for 70S ribosomes.</text>
</comment>
<comment type="subunit">
    <text evidence="1">Binds ribosomal protein uS19.</text>
</comment>
<comment type="subcellular location">
    <subcellularLocation>
        <location evidence="1">Cytoplasm</location>
    </subcellularLocation>
</comment>
<comment type="domain">
    <text evidence="1">The PRC barrel domain binds ribosomal protein uS19.</text>
</comment>
<comment type="similarity">
    <text evidence="1">Belongs to the RimM family.</text>
</comment>
<dbReference type="EMBL" id="CP000724">
    <property type="protein sequence ID" value="ABR48895.1"/>
    <property type="molecule type" value="Genomic_DNA"/>
</dbReference>
<dbReference type="RefSeq" id="WP_012063867.1">
    <property type="nucleotide sequence ID" value="NC_009633.1"/>
</dbReference>
<dbReference type="SMR" id="A6TRS7"/>
<dbReference type="STRING" id="293826.Amet_2744"/>
<dbReference type="KEGG" id="amt:Amet_2744"/>
<dbReference type="eggNOG" id="COG0806">
    <property type="taxonomic scope" value="Bacteria"/>
</dbReference>
<dbReference type="HOGENOM" id="CLU_077636_3_2_9"/>
<dbReference type="OrthoDB" id="9810331at2"/>
<dbReference type="Proteomes" id="UP000001572">
    <property type="component" value="Chromosome"/>
</dbReference>
<dbReference type="GO" id="GO:0005737">
    <property type="term" value="C:cytoplasm"/>
    <property type="evidence" value="ECO:0007669"/>
    <property type="project" value="UniProtKB-SubCell"/>
</dbReference>
<dbReference type="GO" id="GO:0005840">
    <property type="term" value="C:ribosome"/>
    <property type="evidence" value="ECO:0007669"/>
    <property type="project" value="InterPro"/>
</dbReference>
<dbReference type="GO" id="GO:0043022">
    <property type="term" value="F:ribosome binding"/>
    <property type="evidence" value="ECO:0007669"/>
    <property type="project" value="InterPro"/>
</dbReference>
<dbReference type="GO" id="GO:0042274">
    <property type="term" value="P:ribosomal small subunit biogenesis"/>
    <property type="evidence" value="ECO:0007669"/>
    <property type="project" value="UniProtKB-UniRule"/>
</dbReference>
<dbReference type="GO" id="GO:0006364">
    <property type="term" value="P:rRNA processing"/>
    <property type="evidence" value="ECO:0007669"/>
    <property type="project" value="UniProtKB-UniRule"/>
</dbReference>
<dbReference type="Gene3D" id="2.30.30.240">
    <property type="entry name" value="PRC-barrel domain"/>
    <property type="match status" value="1"/>
</dbReference>
<dbReference type="Gene3D" id="2.40.30.60">
    <property type="entry name" value="RimM"/>
    <property type="match status" value="1"/>
</dbReference>
<dbReference type="HAMAP" id="MF_00014">
    <property type="entry name" value="Ribosome_mat_RimM"/>
    <property type="match status" value="1"/>
</dbReference>
<dbReference type="InterPro" id="IPR011033">
    <property type="entry name" value="PRC_barrel-like_sf"/>
</dbReference>
<dbReference type="InterPro" id="IPR056792">
    <property type="entry name" value="PRC_RimM"/>
</dbReference>
<dbReference type="InterPro" id="IPR011961">
    <property type="entry name" value="RimM"/>
</dbReference>
<dbReference type="InterPro" id="IPR002676">
    <property type="entry name" value="RimM_N"/>
</dbReference>
<dbReference type="InterPro" id="IPR036976">
    <property type="entry name" value="RimM_N_sf"/>
</dbReference>
<dbReference type="InterPro" id="IPR009000">
    <property type="entry name" value="Transl_B-barrel_sf"/>
</dbReference>
<dbReference type="NCBIfam" id="TIGR02273">
    <property type="entry name" value="16S_RimM"/>
    <property type="match status" value="1"/>
</dbReference>
<dbReference type="PANTHER" id="PTHR33692">
    <property type="entry name" value="RIBOSOME MATURATION FACTOR RIMM"/>
    <property type="match status" value="1"/>
</dbReference>
<dbReference type="PANTHER" id="PTHR33692:SF1">
    <property type="entry name" value="RIBOSOME MATURATION FACTOR RIMM"/>
    <property type="match status" value="1"/>
</dbReference>
<dbReference type="Pfam" id="PF24986">
    <property type="entry name" value="PRC_RimM"/>
    <property type="match status" value="1"/>
</dbReference>
<dbReference type="Pfam" id="PF01782">
    <property type="entry name" value="RimM"/>
    <property type="match status" value="1"/>
</dbReference>
<dbReference type="SUPFAM" id="SSF50346">
    <property type="entry name" value="PRC-barrel domain"/>
    <property type="match status" value="1"/>
</dbReference>
<dbReference type="SUPFAM" id="SSF50447">
    <property type="entry name" value="Translation proteins"/>
    <property type="match status" value="1"/>
</dbReference>
<keyword id="KW-0143">Chaperone</keyword>
<keyword id="KW-0963">Cytoplasm</keyword>
<keyword id="KW-1185">Reference proteome</keyword>
<keyword id="KW-0690">Ribosome biogenesis</keyword>
<keyword id="KW-0698">rRNA processing</keyword>
<gene>
    <name evidence="1" type="primary">rimM</name>
    <name type="ordered locus">Amet_2744</name>
</gene>
<protein>
    <recommendedName>
        <fullName evidence="1">Ribosome maturation factor RimM</fullName>
    </recommendedName>
</protein>
<sequence length="168" mass="19574">MKKMLKVGQIVNTHGIKGELKVTSLSDYLERFEELEWVYIQGYDEKYYIGNIKYRPTTVILSFEGYDNINIVEQFKGKYVLIDESQRRELPEDTFYKADLIGLDGYTVEEVYLGKLVDIIQAGSNEVYVFRDKETNKDILIPAVKEFIPEISLEKKRITVDPIEGMIE</sequence>
<feature type="chain" id="PRO_1000057112" description="Ribosome maturation factor RimM">
    <location>
        <begin position="1"/>
        <end position="168"/>
    </location>
</feature>
<feature type="domain" description="PRC barrel" evidence="1">
    <location>
        <begin position="92"/>
        <end position="166"/>
    </location>
</feature>
<organism>
    <name type="scientific">Alkaliphilus metalliredigens (strain QYMF)</name>
    <dbReference type="NCBI Taxonomy" id="293826"/>
    <lineage>
        <taxon>Bacteria</taxon>
        <taxon>Bacillati</taxon>
        <taxon>Bacillota</taxon>
        <taxon>Clostridia</taxon>
        <taxon>Peptostreptococcales</taxon>
        <taxon>Natronincolaceae</taxon>
        <taxon>Alkaliphilus</taxon>
    </lineage>
</organism>
<reference key="1">
    <citation type="journal article" date="2016" name="Genome Announc.">
        <title>Complete genome sequence of Alkaliphilus metalliredigens strain QYMF, an alkaliphilic and metal-reducing bacterium isolated from borax-contaminated leachate ponds.</title>
        <authorList>
            <person name="Hwang C."/>
            <person name="Copeland A."/>
            <person name="Lucas S."/>
            <person name="Lapidus A."/>
            <person name="Barry K."/>
            <person name="Detter J.C."/>
            <person name="Glavina Del Rio T."/>
            <person name="Hammon N."/>
            <person name="Israni S."/>
            <person name="Dalin E."/>
            <person name="Tice H."/>
            <person name="Pitluck S."/>
            <person name="Chertkov O."/>
            <person name="Brettin T."/>
            <person name="Bruce D."/>
            <person name="Han C."/>
            <person name="Schmutz J."/>
            <person name="Larimer F."/>
            <person name="Land M.L."/>
            <person name="Hauser L."/>
            <person name="Kyrpides N."/>
            <person name="Mikhailova N."/>
            <person name="Ye Q."/>
            <person name="Zhou J."/>
            <person name="Richardson P."/>
            <person name="Fields M.W."/>
        </authorList>
    </citation>
    <scope>NUCLEOTIDE SEQUENCE [LARGE SCALE GENOMIC DNA]</scope>
    <source>
        <strain>QYMF</strain>
    </source>
</reference>